<dbReference type="EC" id="1.8.4.12" evidence="1"/>
<dbReference type="EMBL" id="CP000926">
    <property type="protein sequence ID" value="ABY97355.1"/>
    <property type="molecule type" value="Genomic_DNA"/>
</dbReference>
<dbReference type="RefSeq" id="WP_012271124.1">
    <property type="nucleotide sequence ID" value="NC_010322.1"/>
</dbReference>
<dbReference type="SMR" id="B0KUQ0"/>
<dbReference type="KEGG" id="ppg:PputGB1_1448"/>
<dbReference type="eggNOG" id="COG0229">
    <property type="taxonomic scope" value="Bacteria"/>
</dbReference>
<dbReference type="HOGENOM" id="CLU_031040_8_5_6"/>
<dbReference type="Proteomes" id="UP000002157">
    <property type="component" value="Chromosome"/>
</dbReference>
<dbReference type="GO" id="GO:0005737">
    <property type="term" value="C:cytoplasm"/>
    <property type="evidence" value="ECO:0007669"/>
    <property type="project" value="TreeGrafter"/>
</dbReference>
<dbReference type="GO" id="GO:0033743">
    <property type="term" value="F:peptide-methionine (R)-S-oxide reductase activity"/>
    <property type="evidence" value="ECO:0007669"/>
    <property type="project" value="UniProtKB-UniRule"/>
</dbReference>
<dbReference type="GO" id="GO:0008270">
    <property type="term" value="F:zinc ion binding"/>
    <property type="evidence" value="ECO:0007669"/>
    <property type="project" value="UniProtKB-UniRule"/>
</dbReference>
<dbReference type="GO" id="GO:0030091">
    <property type="term" value="P:protein repair"/>
    <property type="evidence" value="ECO:0007669"/>
    <property type="project" value="InterPro"/>
</dbReference>
<dbReference type="GO" id="GO:0006979">
    <property type="term" value="P:response to oxidative stress"/>
    <property type="evidence" value="ECO:0007669"/>
    <property type="project" value="InterPro"/>
</dbReference>
<dbReference type="FunFam" id="2.170.150.20:FF:000001">
    <property type="entry name" value="Peptide methionine sulfoxide reductase MsrB"/>
    <property type="match status" value="1"/>
</dbReference>
<dbReference type="Gene3D" id="2.170.150.20">
    <property type="entry name" value="Peptide methionine sulfoxide reductase"/>
    <property type="match status" value="1"/>
</dbReference>
<dbReference type="HAMAP" id="MF_01400">
    <property type="entry name" value="MsrB"/>
    <property type="match status" value="1"/>
</dbReference>
<dbReference type="InterPro" id="IPR028427">
    <property type="entry name" value="Met_Sox_Rdtase_MsrB"/>
</dbReference>
<dbReference type="InterPro" id="IPR002579">
    <property type="entry name" value="Met_Sox_Rdtase_MsrB_dom"/>
</dbReference>
<dbReference type="InterPro" id="IPR011057">
    <property type="entry name" value="Mss4-like_sf"/>
</dbReference>
<dbReference type="NCBIfam" id="TIGR00357">
    <property type="entry name" value="peptide-methionine (R)-S-oxide reductase MsrB"/>
    <property type="match status" value="1"/>
</dbReference>
<dbReference type="PANTHER" id="PTHR10173">
    <property type="entry name" value="METHIONINE SULFOXIDE REDUCTASE"/>
    <property type="match status" value="1"/>
</dbReference>
<dbReference type="PANTHER" id="PTHR10173:SF52">
    <property type="entry name" value="METHIONINE-R-SULFOXIDE REDUCTASE B1"/>
    <property type="match status" value="1"/>
</dbReference>
<dbReference type="Pfam" id="PF01641">
    <property type="entry name" value="SelR"/>
    <property type="match status" value="1"/>
</dbReference>
<dbReference type="SUPFAM" id="SSF51316">
    <property type="entry name" value="Mss4-like"/>
    <property type="match status" value="1"/>
</dbReference>
<dbReference type="PROSITE" id="PS51790">
    <property type="entry name" value="MSRB"/>
    <property type="match status" value="1"/>
</dbReference>
<name>MSRB_PSEPG</name>
<organism>
    <name type="scientific">Pseudomonas putida (strain GB-1)</name>
    <dbReference type="NCBI Taxonomy" id="76869"/>
    <lineage>
        <taxon>Bacteria</taxon>
        <taxon>Pseudomonadati</taxon>
        <taxon>Pseudomonadota</taxon>
        <taxon>Gammaproteobacteria</taxon>
        <taxon>Pseudomonadales</taxon>
        <taxon>Pseudomonadaceae</taxon>
        <taxon>Pseudomonas</taxon>
    </lineage>
</organism>
<proteinExistence type="inferred from homology"/>
<accession>B0KUQ0</accession>
<gene>
    <name evidence="1" type="primary">msrB</name>
    <name type="ordered locus">PputGB1_1448</name>
</gene>
<reference key="1">
    <citation type="submission" date="2008-01" db="EMBL/GenBank/DDBJ databases">
        <title>Complete sequence of Pseudomonas putida GB-1.</title>
        <authorList>
            <consortium name="US DOE Joint Genome Institute"/>
            <person name="Copeland A."/>
            <person name="Lucas S."/>
            <person name="Lapidus A."/>
            <person name="Barry K."/>
            <person name="Glavina del Rio T."/>
            <person name="Dalin E."/>
            <person name="Tice H."/>
            <person name="Pitluck S."/>
            <person name="Bruce D."/>
            <person name="Goodwin L."/>
            <person name="Chertkov O."/>
            <person name="Brettin T."/>
            <person name="Detter J.C."/>
            <person name="Han C."/>
            <person name="Kuske C.R."/>
            <person name="Schmutz J."/>
            <person name="Larimer F."/>
            <person name="Land M."/>
            <person name="Hauser L."/>
            <person name="Kyrpides N."/>
            <person name="Kim E."/>
            <person name="McCarthy J.K."/>
            <person name="Richardson P."/>
        </authorList>
    </citation>
    <scope>NUCLEOTIDE SEQUENCE [LARGE SCALE GENOMIC DNA]</scope>
    <source>
        <strain>GB-1</strain>
    </source>
</reference>
<protein>
    <recommendedName>
        <fullName evidence="1">Peptide methionine sulfoxide reductase MsrB</fullName>
        <ecNumber evidence="1">1.8.4.12</ecNumber>
    </recommendedName>
    <alternativeName>
        <fullName evidence="1">Peptide-methionine (R)-S-oxide reductase</fullName>
    </alternativeName>
</protein>
<sequence length="131" mass="14995">MKKIEKTLDEWRSMLDPEQYQVCRLKGTERPFSGKYNSERRDGIYHCICCNLPLFDAQTKFDSGCGWPSFYAPIEDSAMIEIRDTSHGMIRTEVTCARCDAHLGHVFPDGPAPTGLRYCINSVCIDLRPRD</sequence>
<evidence type="ECO:0000255" key="1">
    <source>
        <dbReference type="HAMAP-Rule" id="MF_01400"/>
    </source>
</evidence>
<evidence type="ECO:0000255" key="2">
    <source>
        <dbReference type="PROSITE-ProRule" id="PRU01126"/>
    </source>
</evidence>
<feature type="chain" id="PRO_1000087339" description="Peptide methionine sulfoxide reductase MsrB">
    <location>
        <begin position="1"/>
        <end position="131"/>
    </location>
</feature>
<feature type="domain" description="MsrB" evidence="2">
    <location>
        <begin position="8"/>
        <end position="130"/>
    </location>
</feature>
<feature type="active site" description="Nucleophile" evidence="2">
    <location>
        <position position="119"/>
    </location>
</feature>
<feature type="binding site" evidence="2">
    <location>
        <position position="47"/>
    </location>
    <ligand>
        <name>Zn(2+)</name>
        <dbReference type="ChEBI" id="CHEBI:29105"/>
    </ligand>
</feature>
<feature type="binding site" evidence="2">
    <location>
        <position position="50"/>
    </location>
    <ligand>
        <name>Zn(2+)</name>
        <dbReference type="ChEBI" id="CHEBI:29105"/>
    </ligand>
</feature>
<feature type="binding site" evidence="2">
    <location>
        <position position="96"/>
    </location>
    <ligand>
        <name>Zn(2+)</name>
        <dbReference type="ChEBI" id="CHEBI:29105"/>
    </ligand>
</feature>
<feature type="binding site" evidence="2">
    <location>
        <position position="99"/>
    </location>
    <ligand>
        <name>Zn(2+)</name>
        <dbReference type="ChEBI" id="CHEBI:29105"/>
    </ligand>
</feature>
<keyword id="KW-0479">Metal-binding</keyword>
<keyword id="KW-0560">Oxidoreductase</keyword>
<keyword id="KW-0862">Zinc</keyword>
<comment type="catalytic activity">
    <reaction evidence="1">
        <text>L-methionyl-[protein] + [thioredoxin]-disulfide + H2O = L-methionyl-(R)-S-oxide-[protein] + [thioredoxin]-dithiol</text>
        <dbReference type="Rhea" id="RHEA:24164"/>
        <dbReference type="Rhea" id="RHEA-COMP:10698"/>
        <dbReference type="Rhea" id="RHEA-COMP:10700"/>
        <dbReference type="Rhea" id="RHEA-COMP:12313"/>
        <dbReference type="Rhea" id="RHEA-COMP:12314"/>
        <dbReference type="ChEBI" id="CHEBI:15377"/>
        <dbReference type="ChEBI" id="CHEBI:16044"/>
        <dbReference type="ChEBI" id="CHEBI:29950"/>
        <dbReference type="ChEBI" id="CHEBI:45764"/>
        <dbReference type="ChEBI" id="CHEBI:50058"/>
        <dbReference type="EC" id="1.8.4.12"/>
    </reaction>
</comment>
<comment type="cofactor">
    <cofactor evidence="1">
        <name>Zn(2+)</name>
        <dbReference type="ChEBI" id="CHEBI:29105"/>
    </cofactor>
    <text evidence="1">Binds 1 zinc ion per subunit. The zinc ion is important for the structural integrity of the protein.</text>
</comment>
<comment type="similarity">
    <text evidence="1">Belongs to the MsrB Met sulfoxide reductase family.</text>
</comment>